<evidence type="ECO:0000250" key="1"/>
<evidence type="ECO:0000255" key="2"/>
<evidence type="ECO:0000255" key="3">
    <source>
        <dbReference type="PROSITE-ProRule" id="PRU10067"/>
    </source>
</evidence>
<evidence type="ECO:0000305" key="4"/>
<feature type="signal peptide">
    <location>
        <begin position="1"/>
        <end position="19"/>
    </location>
</feature>
<feature type="chain" id="PRO_0000033404" description="Invertase 7">
    <location>
        <begin position="20"/>
        <end position="96"/>
    </location>
</feature>
<feature type="active site" evidence="3">
    <location>
        <position position="42"/>
    </location>
</feature>
<feature type="binding site" evidence="1">
    <location>
        <begin position="39"/>
        <end position="42"/>
    </location>
    <ligand>
        <name>substrate</name>
    </ligand>
</feature>
<feature type="binding site" evidence="1">
    <location>
        <position position="60"/>
    </location>
    <ligand>
        <name>substrate</name>
    </ligand>
</feature>
<feature type="glycosylation site" description="N-linked (GlcNAc...) asparagine" evidence="2">
    <location>
        <position position="23"/>
    </location>
</feature>
<feature type="glycosylation site" description="N-linked (GlcNAc...) asparagine" evidence="2">
    <location>
        <position position="64"/>
    </location>
</feature>
<feature type="glycosylation site" description="N-linked (GlcNAc...) asparagine" evidence="2">
    <location>
        <position position="76"/>
    </location>
</feature>
<feature type="non-consecutive residues" evidence="4">
    <location>
        <begin position="74"/>
        <end position="75"/>
    </location>
</feature>
<gene>
    <name type="primary">SUC7</name>
</gene>
<comment type="catalytic activity">
    <reaction evidence="3">
        <text>Hydrolysis of terminal non-reducing beta-D-fructofuranoside residues in beta-D-fructofuranosides.</text>
        <dbReference type="EC" id="3.2.1.26"/>
    </reaction>
</comment>
<comment type="similarity">
    <text evidence="4">Belongs to the glycosyl hydrolase 32 family.</text>
</comment>
<name>INV7_YEASX</name>
<accession>P07635</accession>
<protein>
    <recommendedName>
        <fullName>Invertase 7</fullName>
        <ecNumber>3.2.1.26</ecNumber>
    </recommendedName>
    <alternativeName>
        <fullName>Beta-fructofuranosidase 7</fullName>
    </alternativeName>
    <alternativeName>
        <fullName>Saccharase</fullName>
    </alternativeName>
</protein>
<keyword id="KW-0325">Glycoprotein</keyword>
<keyword id="KW-0326">Glycosidase</keyword>
<keyword id="KW-0378">Hydrolase</keyword>
<keyword id="KW-0732">Signal</keyword>
<reference key="1">
    <citation type="journal article" date="1985" name="Nucleic Acids Res.">
        <title>Comparison of two yeast invertase genes: conservation of the upstream regulatory region.</title>
        <authorList>
            <person name="Sarokin L."/>
            <person name="Carlson M."/>
        </authorList>
    </citation>
    <scope>NUCLEOTIDE SEQUENCE [GENOMIC DNA]</scope>
</reference>
<dbReference type="EC" id="3.2.1.26"/>
<dbReference type="EMBL" id="X02908">
    <property type="protein sequence ID" value="CAA26667.1"/>
    <property type="status" value="ALT_TERM"/>
    <property type="molecule type" value="Genomic_DNA"/>
</dbReference>
<dbReference type="EMBL" id="X02909">
    <property type="protein sequence ID" value="CAA26668.1"/>
    <property type="molecule type" value="Genomic_DNA"/>
</dbReference>
<dbReference type="PIR" id="A05306">
    <property type="entry name" value="A05306"/>
</dbReference>
<dbReference type="SMR" id="P07635"/>
<dbReference type="CAZy" id="GH32">
    <property type="family name" value="Glycoside Hydrolase Family 32"/>
</dbReference>
<dbReference type="GlyCosmos" id="P07635">
    <property type="glycosylation" value="3 sites, No reported glycans"/>
</dbReference>
<dbReference type="SGD" id="S000029535">
    <property type="gene designation" value="SUC7"/>
</dbReference>
<dbReference type="VEuPathDB" id="FungiDB:YIL162W"/>
<dbReference type="GO" id="GO:0005576">
    <property type="term" value="C:extracellular region"/>
    <property type="evidence" value="ECO:0000305"/>
    <property type="project" value="SGD"/>
</dbReference>
<dbReference type="GO" id="GO:0000324">
    <property type="term" value="C:fungal-type vacuole"/>
    <property type="evidence" value="ECO:0007669"/>
    <property type="project" value="TreeGrafter"/>
</dbReference>
<dbReference type="GO" id="GO:0004564">
    <property type="term" value="F:beta-fructofuranosidase activity"/>
    <property type="evidence" value="ECO:0000316"/>
    <property type="project" value="SGD"/>
</dbReference>
<dbReference type="GO" id="GO:0004575">
    <property type="term" value="F:sucrose alpha-glucosidase activity"/>
    <property type="evidence" value="ECO:0007669"/>
    <property type="project" value="TreeGrafter"/>
</dbReference>
<dbReference type="GO" id="GO:0036008">
    <property type="term" value="P:sucrose catabolic process to fructose-6-phosphate and glucose-6-phosphate"/>
    <property type="evidence" value="ECO:0000316"/>
    <property type="project" value="SGD"/>
</dbReference>
<dbReference type="Gene3D" id="2.115.10.20">
    <property type="entry name" value="Glycosyl hydrolase domain, family 43"/>
    <property type="match status" value="1"/>
</dbReference>
<dbReference type="InterPro" id="IPR018053">
    <property type="entry name" value="Glyco_hydro_32_AS"/>
</dbReference>
<dbReference type="InterPro" id="IPR013148">
    <property type="entry name" value="Glyco_hydro_32_N"/>
</dbReference>
<dbReference type="InterPro" id="IPR023296">
    <property type="entry name" value="Glyco_hydro_beta-prop_sf"/>
</dbReference>
<dbReference type="PANTHER" id="PTHR42800">
    <property type="entry name" value="EXOINULINASE INUD (AFU_ORTHOLOGUE AFUA_5G00480)"/>
    <property type="match status" value="1"/>
</dbReference>
<dbReference type="PANTHER" id="PTHR42800:SF4">
    <property type="entry name" value="INVERTASE 2"/>
    <property type="match status" value="1"/>
</dbReference>
<dbReference type="Pfam" id="PF00251">
    <property type="entry name" value="Glyco_hydro_32N"/>
    <property type="match status" value="1"/>
</dbReference>
<dbReference type="SUPFAM" id="SSF75005">
    <property type="entry name" value="Arabinanase/levansucrase/invertase"/>
    <property type="match status" value="1"/>
</dbReference>
<dbReference type="PROSITE" id="PS00609">
    <property type="entry name" value="GLYCOSYL_HYDROL_F32"/>
    <property type="match status" value="1"/>
</dbReference>
<sequence length="96" mass="11249">MLLQAFIFLLAGFAAKISALMTNETSDRPLVHFTPNKGWMNDPNGLWYDAKEGKWHLYFQYNPNDTVWGLPLFWVNMTTGVDNLFYIDKFQVREVK</sequence>
<organism>
    <name type="scientific">Saccharomyces cerevisiae</name>
    <name type="common">Baker's yeast</name>
    <dbReference type="NCBI Taxonomy" id="4932"/>
    <lineage>
        <taxon>Eukaryota</taxon>
        <taxon>Fungi</taxon>
        <taxon>Dikarya</taxon>
        <taxon>Ascomycota</taxon>
        <taxon>Saccharomycotina</taxon>
        <taxon>Saccharomycetes</taxon>
        <taxon>Saccharomycetales</taxon>
        <taxon>Saccharomycetaceae</taxon>
        <taxon>Saccharomyces</taxon>
    </lineage>
</organism>
<proteinExistence type="inferred from homology"/>